<reference key="1">
    <citation type="journal article" date="2009" name="J. Bacteriol.">
        <title>Genome sequences of three Agrobacterium biovars help elucidate the evolution of multichromosome genomes in bacteria.</title>
        <authorList>
            <person name="Slater S.C."/>
            <person name="Goldman B.S."/>
            <person name="Goodner B."/>
            <person name="Setubal J.C."/>
            <person name="Farrand S.K."/>
            <person name="Nester E.W."/>
            <person name="Burr T.J."/>
            <person name="Banta L."/>
            <person name="Dickerman A.W."/>
            <person name="Paulsen I."/>
            <person name="Otten L."/>
            <person name="Suen G."/>
            <person name="Welch R."/>
            <person name="Almeida N.F."/>
            <person name="Arnold F."/>
            <person name="Burton O.T."/>
            <person name="Du Z."/>
            <person name="Ewing A."/>
            <person name="Godsy E."/>
            <person name="Heisel S."/>
            <person name="Houmiel K.L."/>
            <person name="Jhaveri J."/>
            <person name="Lu J."/>
            <person name="Miller N.M."/>
            <person name="Norton S."/>
            <person name="Chen Q."/>
            <person name="Phoolcharoen W."/>
            <person name="Ohlin V."/>
            <person name="Ondrusek D."/>
            <person name="Pride N."/>
            <person name="Stricklin S.L."/>
            <person name="Sun J."/>
            <person name="Wheeler C."/>
            <person name="Wilson L."/>
            <person name="Zhu H."/>
            <person name="Wood D.W."/>
        </authorList>
    </citation>
    <scope>NUCLEOTIDE SEQUENCE [LARGE SCALE GENOMIC DNA]</scope>
    <source>
        <strain>K84 / ATCC BAA-868</strain>
    </source>
</reference>
<keyword id="KW-0963">Cytoplasm</keyword>
<keyword id="KW-0489">Methyltransferase</keyword>
<keyword id="KW-0698">rRNA processing</keyword>
<keyword id="KW-0949">S-adenosyl-L-methionine</keyword>
<keyword id="KW-0808">Transferase</keyword>
<organism>
    <name type="scientific">Rhizobium rhizogenes (strain K84 / ATCC BAA-868)</name>
    <name type="common">Agrobacterium radiobacter</name>
    <dbReference type="NCBI Taxonomy" id="311403"/>
    <lineage>
        <taxon>Bacteria</taxon>
        <taxon>Pseudomonadati</taxon>
        <taxon>Pseudomonadota</taxon>
        <taxon>Alphaproteobacteria</taxon>
        <taxon>Hyphomicrobiales</taxon>
        <taxon>Rhizobiaceae</taxon>
        <taxon>Rhizobium/Agrobacterium group</taxon>
        <taxon>Rhizobium</taxon>
    </lineage>
</organism>
<comment type="function">
    <text evidence="1">Specifically methylates the uridine in position 2552 of 23S rRNA at the 2'-O position of the ribose in the fully assembled 50S ribosomal subunit.</text>
</comment>
<comment type="catalytic activity">
    <reaction evidence="1">
        <text>uridine(2552) in 23S rRNA + S-adenosyl-L-methionine = 2'-O-methyluridine(2552) in 23S rRNA + S-adenosyl-L-homocysteine + H(+)</text>
        <dbReference type="Rhea" id="RHEA:42720"/>
        <dbReference type="Rhea" id="RHEA-COMP:10202"/>
        <dbReference type="Rhea" id="RHEA-COMP:10203"/>
        <dbReference type="ChEBI" id="CHEBI:15378"/>
        <dbReference type="ChEBI" id="CHEBI:57856"/>
        <dbReference type="ChEBI" id="CHEBI:59789"/>
        <dbReference type="ChEBI" id="CHEBI:65315"/>
        <dbReference type="ChEBI" id="CHEBI:74478"/>
        <dbReference type="EC" id="2.1.1.166"/>
    </reaction>
</comment>
<comment type="subcellular location">
    <subcellularLocation>
        <location evidence="1">Cytoplasm</location>
    </subcellularLocation>
</comment>
<comment type="similarity">
    <text evidence="1">Belongs to the class I-like SAM-binding methyltransferase superfamily. RNA methyltransferase RlmE family.</text>
</comment>
<proteinExistence type="inferred from homology"/>
<protein>
    <recommendedName>
        <fullName evidence="1">Ribosomal RNA large subunit methyltransferase E</fullName>
        <ecNumber evidence="1">2.1.1.166</ecNumber>
    </recommendedName>
    <alternativeName>
        <fullName evidence="1">23S rRNA Um2552 methyltransferase</fullName>
    </alternativeName>
    <alternativeName>
        <fullName evidence="1">rRNA (uridine-2'-O-)-methyltransferase</fullName>
    </alternativeName>
</protein>
<gene>
    <name evidence="1" type="primary">rlmE</name>
    <name evidence="1" type="synonym">ftsJ</name>
    <name evidence="1" type="synonym">rrmJ</name>
    <name type="ordered locus">Arad_1002</name>
</gene>
<evidence type="ECO:0000255" key="1">
    <source>
        <dbReference type="HAMAP-Rule" id="MF_01547"/>
    </source>
</evidence>
<sequence>MTKPTIAGNRTGRKLGQRVKKKKLKASSREWLHRHINDPYVQRAQLEGYRARAAFKLLEIDEKHQILKGARRIIDLGAAPGSWSQIAAKVTGSTEDDIRVAAIDFLEMAHLPGVTILQLDFLDPDAPQRLVDAVGGEPDLVMSDMAAPTTGHHRTDHLRTMHLCEVAAHFAIEVLAEGGHFLAKTFQGGTERDLLNLLKQNFRQVVHVKPGASRAESVEMFLLAKGFKGRNVEHGTISA</sequence>
<name>RLME_RHIR8</name>
<accession>B9J9U0</accession>
<feature type="chain" id="PRO_1000185287" description="Ribosomal RNA large subunit methyltransferase E">
    <location>
        <begin position="1"/>
        <end position="239"/>
    </location>
</feature>
<feature type="active site" description="Proton acceptor" evidence="1">
    <location>
        <position position="184"/>
    </location>
</feature>
<feature type="binding site" evidence="1">
    <location>
        <position position="81"/>
    </location>
    <ligand>
        <name>S-adenosyl-L-methionine</name>
        <dbReference type="ChEBI" id="CHEBI:59789"/>
    </ligand>
</feature>
<feature type="binding site" evidence="1">
    <location>
        <position position="83"/>
    </location>
    <ligand>
        <name>S-adenosyl-L-methionine</name>
        <dbReference type="ChEBI" id="CHEBI:59789"/>
    </ligand>
</feature>
<feature type="binding site" evidence="1">
    <location>
        <position position="104"/>
    </location>
    <ligand>
        <name>S-adenosyl-L-methionine</name>
        <dbReference type="ChEBI" id="CHEBI:59789"/>
    </ligand>
</feature>
<feature type="binding site" evidence="1">
    <location>
        <position position="120"/>
    </location>
    <ligand>
        <name>S-adenosyl-L-methionine</name>
        <dbReference type="ChEBI" id="CHEBI:59789"/>
    </ligand>
</feature>
<feature type="binding site" evidence="1">
    <location>
        <position position="144"/>
    </location>
    <ligand>
        <name>S-adenosyl-L-methionine</name>
        <dbReference type="ChEBI" id="CHEBI:59789"/>
    </ligand>
</feature>
<dbReference type="EC" id="2.1.1.166" evidence="1"/>
<dbReference type="EMBL" id="CP000628">
    <property type="protein sequence ID" value="ACM25558.1"/>
    <property type="molecule type" value="Genomic_DNA"/>
</dbReference>
<dbReference type="RefSeq" id="WP_007699969.1">
    <property type="nucleotide sequence ID" value="NC_011985.1"/>
</dbReference>
<dbReference type="SMR" id="B9J9U0"/>
<dbReference type="STRING" id="311403.Arad_1002"/>
<dbReference type="KEGG" id="ara:Arad_1002"/>
<dbReference type="eggNOG" id="COG0293">
    <property type="taxonomic scope" value="Bacteria"/>
</dbReference>
<dbReference type="HOGENOM" id="CLU_009422_4_0_5"/>
<dbReference type="Proteomes" id="UP000001600">
    <property type="component" value="Chromosome 1"/>
</dbReference>
<dbReference type="GO" id="GO:0005737">
    <property type="term" value="C:cytoplasm"/>
    <property type="evidence" value="ECO:0007669"/>
    <property type="project" value="UniProtKB-SubCell"/>
</dbReference>
<dbReference type="GO" id="GO:0008650">
    <property type="term" value="F:rRNA (uridine-2'-O-)-methyltransferase activity"/>
    <property type="evidence" value="ECO:0007669"/>
    <property type="project" value="UniProtKB-UniRule"/>
</dbReference>
<dbReference type="Gene3D" id="3.40.50.150">
    <property type="entry name" value="Vaccinia Virus protein VP39"/>
    <property type="match status" value="1"/>
</dbReference>
<dbReference type="HAMAP" id="MF_01547">
    <property type="entry name" value="RNA_methyltr_E"/>
    <property type="match status" value="1"/>
</dbReference>
<dbReference type="InterPro" id="IPR050082">
    <property type="entry name" value="RNA_methyltr_RlmE"/>
</dbReference>
<dbReference type="InterPro" id="IPR002877">
    <property type="entry name" value="RNA_MeTrfase_FtsJ_dom"/>
</dbReference>
<dbReference type="InterPro" id="IPR015507">
    <property type="entry name" value="rRNA-MeTfrase_E"/>
</dbReference>
<dbReference type="InterPro" id="IPR029063">
    <property type="entry name" value="SAM-dependent_MTases_sf"/>
</dbReference>
<dbReference type="PANTHER" id="PTHR10920">
    <property type="entry name" value="RIBOSOMAL RNA METHYLTRANSFERASE"/>
    <property type="match status" value="1"/>
</dbReference>
<dbReference type="PANTHER" id="PTHR10920:SF18">
    <property type="entry name" value="RRNA METHYLTRANSFERASE 2, MITOCHONDRIAL"/>
    <property type="match status" value="1"/>
</dbReference>
<dbReference type="Pfam" id="PF01728">
    <property type="entry name" value="FtsJ"/>
    <property type="match status" value="1"/>
</dbReference>
<dbReference type="PIRSF" id="PIRSF005461">
    <property type="entry name" value="23S_rRNA_mtase"/>
    <property type="match status" value="1"/>
</dbReference>
<dbReference type="SUPFAM" id="SSF53335">
    <property type="entry name" value="S-adenosyl-L-methionine-dependent methyltransferases"/>
    <property type="match status" value="1"/>
</dbReference>